<name>RL9_STRPG</name>
<comment type="function">
    <text evidence="1">Binds to the 23S rRNA.</text>
</comment>
<comment type="similarity">
    <text evidence="1">Belongs to the bacterial ribosomal protein bL9 family.</text>
</comment>
<organism>
    <name type="scientific">Streptococcus pyogenes serotype M5 (strain Manfredo)</name>
    <dbReference type="NCBI Taxonomy" id="160491"/>
    <lineage>
        <taxon>Bacteria</taxon>
        <taxon>Bacillati</taxon>
        <taxon>Bacillota</taxon>
        <taxon>Bacilli</taxon>
        <taxon>Lactobacillales</taxon>
        <taxon>Streptococcaceae</taxon>
        <taxon>Streptococcus</taxon>
    </lineage>
</organism>
<reference key="1">
    <citation type="journal article" date="2007" name="J. Bacteriol.">
        <title>Complete genome of acute rheumatic fever-associated serotype M5 Streptococcus pyogenes strain Manfredo.</title>
        <authorList>
            <person name="Holden M.T.G."/>
            <person name="Scott A."/>
            <person name="Cherevach I."/>
            <person name="Chillingworth T."/>
            <person name="Churcher C."/>
            <person name="Cronin A."/>
            <person name="Dowd L."/>
            <person name="Feltwell T."/>
            <person name="Hamlin N."/>
            <person name="Holroyd S."/>
            <person name="Jagels K."/>
            <person name="Moule S."/>
            <person name="Mungall K."/>
            <person name="Quail M.A."/>
            <person name="Price C."/>
            <person name="Rabbinowitsch E."/>
            <person name="Sharp S."/>
            <person name="Skelton J."/>
            <person name="Whitehead S."/>
            <person name="Barrell B.G."/>
            <person name="Kehoe M."/>
            <person name="Parkhill J."/>
        </authorList>
    </citation>
    <scope>NUCLEOTIDE SEQUENCE [LARGE SCALE GENOMIC DNA]</scope>
    <source>
        <strain>Manfredo</strain>
    </source>
</reference>
<evidence type="ECO:0000255" key="1">
    <source>
        <dbReference type="HAMAP-Rule" id="MF_00503"/>
    </source>
</evidence>
<evidence type="ECO:0000305" key="2"/>
<protein>
    <recommendedName>
        <fullName evidence="1">Large ribosomal subunit protein bL9</fullName>
    </recommendedName>
    <alternativeName>
        <fullName evidence="2">50S ribosomal protein L9</fullName>
    </alternativeName>
</protein>
<feature type="chain" id="PRO_1000014871" description="Large ribosomal subunit protein bL9">
    <location>
        <begin position="1"/>
        <end position="150"/>
    </location>
</feature>
<proteinExistence type="inferred from homology"/>
<sequence>MKVIFLADVKGKGKKGEIKEVPTGYAQNFLIKKNLAKEATSQSIGELKGKQKAEEKAQAEILAEAQAVKAVLDEDKTRVQFQEKVGPDGRTFGSITAKKISEELQKQFGVKVDKRHIVLDHPIRAIGLFEVPVKLHKELTAEIKLAITEA</sequence>
<keyword id="KW-0687">Ribonucleoprotein</keyword>
<keyword id="KW-0689">Ribosomal protein</keyword>
<keyword id="KW-0694">RNA-binding</keyword>
<keyword id="KW-0699">rRNA-binding</keyword>
<dbReference type="EMBL" id="AM295007">
    <property type="protein sequence ID" value="CAM31133.1"/>
    <property type="molecule type" value="Genomic_DNA"/>
</dbReference>
<dbReference type="RefSeq" id="WP_011889252.1">
    <property type="nucleotide sequence ID" value="NC_009332.1"/>
</dbReference>
<dbReference type="SMR" id="A2RH01"/>
<dbReference type="KEGG" id="spf:SpyM51808"/>
<dbReference type="HOGENOM" id="CLU_078938_3_2_9"/>
<dbReference type="GO" id="GO:1990904">
    <property type="term" value="C:ribonucleoprotein complex"/>
    <property type="evidence" value="ECO:0007669"/>
    <property type="project" value="UniProtKB-KW"/>
</dbReference>
<dbReference type="GO" id="GO:0005840">
    <property type="term" value="C:ribosome"/>
    <property type="evidence" value="ECO:0007669"/>
    <property type="project" value="UniProtKB-KW"/>
</dbReference>
<dbReference type="GO" id="GO:0019843">
    <property type="term" value="F:rRNA binding"/>
    <property type="evidence" value="ECO:0007669"/>
    <property type="project" value="UniProtKB-UniRule"/>
</dbReference>
<dbReference type="GO" id="GO:0003735">
    <property type="term" value="F:structural constituent of ribosome"/>
    <property type="evidence" value="ECO:0007669"/>
    <property type="project" value="InterPro"/>
</dbReference>
<dbReference type="GO" id="GO:0006412">
    <property type="term" value="P:translation"/>
    <property type="evidence" value="ECO:0007669"/>
    <property type="project" value="UniProtKB-UniRule"/>
</dbReference>
<dbReference type="FunFam" id="3.40.5.10:FF:000002">
    <property type="entry name" value="50S ribosomal protein L9"/>
    <property type="match status" value="1"/>
</dbReference>
<dbReference type="Gene3D" id="3.10.430.100">
    <property type="entry name" value="Ribosomal protein L9, C-terminal domain"/>
    <property type="match status" value="1"/>
</dbReference>
<dbReference type="Gene3D" id="3.40.5.10">
    <property type="entry name" value="Ribosomal protein L9, N-terminal domain"/>
    <property type="match status" value="1"/>
</dbReference>
<dbReference type="HAMAP" id="MF_00503">
    <property type="entry name" value="Ribosomal_bL9"/>
    <property type="match status" value="1"/>
</dbReference>
<dbReference type="InterPro" id="IPR000244">
    <property type="entry name" value="Ribosomal_bL9"/>
</dbReference>
<dbReference type="InterPro" id="IPR009027">
    <property type="entry name" value="Ribosomal_bL9/RNase_H1_N"/>
</dbReference>
<dbReference type="InterPro" id="IPR020594">
    <property type="entry name" value="Ribosomal_bL9_bac/chp"/>
</dbReference>
<dbReference type="InterPro" id="IPR020069">
    <property type="entry name" value="Ribosomal_bL9_C"/>
</dbReference>
<dbReference type="InterPro" id="IPR036791">
    <property type="entry name" value="Ribosomal_bL9_C_sf"/>
</dbReference>
<dbReference type="InterPro" id="IPR020070">
    <property type="entry name" value="Ribosomal_bL9_N"/>
</dbReference>
<dbReference type="InterPro" id="IPR036935">
    <property type="entry name" value="Ribosomal_bL9_N_sf"/>
</dbReference>
<dbReference type="NCBIfam" id="TIGR00158">
    <property type="entry name" value="L9"/>
    <property type="match status" value="1"/>
</dbReference>
<dbReference type="PANTHER" id="PTHR21368">
    <property type="entry name" value="50S RIBOSOMAL PROTEIN L9"/>
    <property type="match status" value="1"/>
</dbReference>
<dbReference type="Pfam" id="PF03948">
    <property type="entry name" value="Ribosomal_L9_C"/>
    <property type="match status" value="1"/>
</dbReference>
<dbReference type="Pfam" id="PF01281">
    <property type="entry name" value="Ribosomal_L9_N"/>
    <property type="match status" value="1"/>
</dbReference>
<dbReference type="SUPFAM" id="SSF55658">
    <property type="entry name" value="L9 N-domain-like"/>
    <property type="match status" value="1"/>
</dbReference>
<dbReference type="SUPFAM" id="SSF55653">
    <property type="entry name" value="Ribosomal protein L9 C-domain"/>
    <property type="match status" value="1"/>
</dbReference>
<dbReference type="PROSITE" id="PS00651">
    <property type="entry name" value="RIBOSOMAL_L9"/>
    <property type="match status" value="1"/>
</dbReference>
<accession>A2RH01</accession>
<gene>
    <name evidence="1" type="primary">rplI</name>
    <name type="ordered locus">SpyM51808</name>
</gene>